<keyword id="KW-0030">Aminoacyl-tRNA synthetase</keyword>
<keyword id="KW-0067">ATP-binding</keyword>
<keyword id="KW-0963">Cytoplasm</keyword>
<keyword id="KW-0436">Ligase</keyword>
<keyword id="KW-0547">Nucleotide-binding</keyword>
<keyword id="KW-0648">Protein biosynthesis</keyword>
<keyword id="KW-1185">Reference proteome</keyword>
<name>SYL_ORITB</name>
<feature type="chain" id="PRO_0000334786" description="Leucine--tRNA ligase">
    <location>
        <begin position="1"/>
        <end position="838"/>
    </location>
</feature>
<feature type="short sequence motif" description="'HIGH' region">
    <location>
        <begin position="38"/>
        <end position="48"/>
    </location>
</feature>
<feature type="short sequence motif" description="'KMSKS' region">
    <location>
        <begin position="608"/>
        <end position="612"/>
    </location>
</feature>
<feature type="binding site" evidence="1">
    <location>
        <position position="611"/>
    </location>
    <ligand>
        <name>ATP</name>
        <dbReference type="ChEBI" id="CHEBI:30616"/>
    </ligand>
</feature>
<evidence type="ECO:0000255" key="1">
    <source>
        <dbReference type="HAMAP-Rule" id="MF_00049"/>
    </source>
</evidence>
<gene>
    <name evidence="1" type="primary">leuS</name>
    <name type="ordered locus">OTBS_0468</name>
</gene>
<organism>
    <name type="scientific">Orientia tsutsugamushi (strain Boryong)</name>
    <name type="common">Rickettsia tsutsugamushi</name>
    <dbReference type="NCBI Taxonomy" id="357244"/>
    <lineage>
        <taxon>Bacteria</taxon>
        <taxon>Pseudomonadati</taxon>
        <taxon>Pseudomonadota</taxon>
        <taxon>Alphaproteobacteria</taxon>
        <taxon>Rickettsiales</taxon>
        <taxon>Rickettsiaceae</taxon>
        <taxon>Rickettsieae</taxon>
        <taxon>Orientia</taxon>
    </lineage>
</organism>
<accession>A5CCT4</accession>
<protein>
    <recommendedName>
        <fullName evidence="1">Leucine--tRNA ligase</fullName>
        <ecNumber evidence="1">6.1.1.4</ecNumber>
    </recommendedName>
    <alternativeName>
        <fullName evidence="1">Leucyl-tRNA synthetase</fullName>
        <shortName evidence="1">LeuRS</shortName>
    </alternativeName>
</protein>
<comment type="catalytic activity">
    <reaction evidence="1">
        <text>tRNA(Leu) + L-leucine + ATP = L-leucyl-tRNA(Leu) + AMP + diphosphate</text>
        <dbReference type="Rhea" id="RHEA:11688"/>
        <dbReference type="Rhea" id="RHEA-COMP:9613"/>
        <dbReference type="Rhea" id="RHEA-COMP:9622"/>
        <dbReference type="ChEBI" id="CHEBI:30616"/>
        <dbReference type="ChEBI" id="CHEBI:33019"/>
        <dbReference type="ChEBI" id="CHEBI:57427"/>
        <dbReference type="ChEBI" id="CHEBI:78442"/>
        <dbReference type="ChEBI" id="CHEBI:78494"/>
        <dbReference type="ChEBI" id="CHEBI:456215"/>
        <dbReference type="EC" id="6.1.1.4"/>
    </reaction>
</comment>
<comment type="subcellular location">
    <subcellularLocation>
        <location evidence="1">Cytoplasm</location>
    </subcellularLocation>
</comment>
<comment type="similarity">
    <text evidence="1">Belongs to the class-I aminoacyl-tRNA synthetase family.</text>
</comment>
<dbReference type="EC" id="6.1.1.4" evidence="1"/>
<dbReference type="EMBL" id="AM494475">
    <property type="protein sequence ID" value="CAM79534.1"/>
    <property type="molecule type" value="Genomic_DNA"/>
</dbReference>
<dbReference type="RefSeq" id="WP_011944500.1">
    <property type="nucleotide sequence ID" value="NC_009488.1"/>
</dbReference>
<dbReference type="SMR" id="A5CCT4"/>
<dbReference type="KEGG" id="ots:OTBS_0468"/>
<dbReference type="eggNOG" id="COG0495">
    <property type="taxonomic scope" value="Bacteria"/>
</dbReference>
<dbReference type="HOGENOM" id="CLU_004427_0_0_5"/>
<dbReference type="Proteomes" id="UP000001565">
    <property type="component" value="Chromosome"/>
</dbReference>
<dbReference type="GO" id="GO:0005737">
    <property type="term" value="C:cytoplasm"/>
    <property type="evidence" value="ECO:0007669"/>
    <property type="project" value="UniProtKB-SubCell"/>
</dbReference>
<dbReference type="GO" id="GO:0002161">
    <property type="term" value="F:aminoacyl-tRNA deacylase activity"/>
    <property type="evidence" value="ECO:0007669"/>
    <property type="project" value="InterPro"/>
</dbReference>
<dbReference type="GO" id="GO:0005524">
    <property type="term" value="F:ATP binding"/>
    <property type="evidence" value="ECO:0007669"/>
    <property type="project" value="UniProtKB-UniRule"/>
</dbReference>
<dbReference type="GO" id="GO:0004823">
    <property type="term" value="F:leucine-tRNA ligase activity"/>
    <property type="evidence" value="ECO:0007669"/>
    <property type="project" value="UniProtKB-UniRule"/>
</dbReference>
<dbReference type="GO" id="GO:0006429">
    <property type="term" value="P:leucyl-tRNA aminoacylation"/>
    <property type="evidence" value="ECO:0007669"/>
    <property type="project" value="UniProtKB-UniRule"/>
</dbReference>
<dbReference type="CDD" id="cd07958">
    <property type="entry name" value="Anticodon_Ia_Leu_BEm"/>
    <property type="match status" value="1"/>
</dbReference>
<dbReference type="CDD" id="cd00812">
    <property type="entry name" value="LeuRS_core"/>
    <property type="match status" value="1"/>
</dbReference>
<dbReference type="FunFam" id="1.10.730.10:FF:000002">
    <property type="entry name" value="Leucine--tRNA ligase"/>
    <property type="match status" value="1"/>
</dbReference>
<dbReference type="FunFam" id="3.40.50.620:FF:000003">
    <property type="entry name" value="Leucine--tRNA ligase"/>
    <property type="match status" value="1"/>
</dbReference>
<dbReference type="FunFam" id="3.40.50.620:FF:000056">
    <property type="entry name" value="Leucine--tRNA ligase"/>
    <property type="match status" value="1"/>
</dbReference>
<dbReference type="Gene3D" id="2.20.28.290">
    <property type="match status" value="1"/>
</dbReference>
<dbReference type="Gene3D" id="3.10.20.590">
    <property type="match status" value="1"/>
</dbReference>
<dbReference type="Gene3D" id="3.40.50.620">
    <property type="entry name" value="HUPs"/>
    <property type="match status" value="2"/>
</dbReference>
<dbReference type="Gene3D" id="1.10.730.10">
    <property type="entry name" value="Isoleucyl-tRNA Synthetase, Domain 1"/>
    <property type="match status" value="1"/>
</dbReference>
<dbReference type="HAMAP" id="MF_00049_B">
    <property type="entry name" value="Leu_tRNA_synth_B"/>
    <property type="match status" value="1"/>
</dbReference>
<dbReference type="InterPro" id="IPR002300">
    <property type="entry name" value="aa-tRNA-synth_Ia"/>
</dbReference>
<dbReference type="InterPro" id="IPR002302">
    <property type="entry name" value="Leu-tRNA-ligase"/>
</dbReference>
<dbReference type="InterPro" id="IPR025709">
    <property type="entry name" value="Leu_tRNA-synth_edit"/>
</dbReference>
<dbReference type="InterPro" id="IPR013155">
    <property type="entry name" value="M/V/L/I-tRNA-synth_anticd-bd"/>
</dbReference>
<dbReference type="InterPro" id="IPR015413">
    <property type="entry name" value="Methionyl/Leucyl_tRNA_Synth"/>
</dbReference>
<dbReference type="InterPro" id="IPR014729">
    <property type="entry name" value="Rossmann-like_a/b/a_fold"/>
</dbReference>
<dbReference type="InterPro" id="IPR009080">
    <property type="entry name" value="tRNAsynth_Ia_anticodon-bd"/>
</dbReference>
<dbReference type="InterPro" id="IPR009008">
    <property type="entry name" value="Val/Leu/Ile-tRNA-synth_edit"/>
</dbReference>
<dbReference type="NCBIfam" id="TIGR00396">
    <property type="entry name" value="leuS_bact"/>
    <property type="match status" value="1"/>
</dbReference>
<dbReference type="PANTHER" id="PTHR43740:SF2">
    <property type="entry name" value="LEUCINE--TRNA LIGASE, MITOCHONDRIAL"/>
    <property type="match status" value="1"/>
</dbReference>
<dbReference type="PANTHER" id="PTHR43740">
    <property type="entry name" value="LEUCYL-TRNA SYNTHETASE"/>
    <property type="match status" value="1"/>
</dbReference>
<dbReference type="Pfam" id="PF08264">
    <property type="entry name" value="Anticodon_1"/>
    <property type="match status" value="1"/>
</dbReference>
<dbReference type="Pfam" id="PF00133">
    <property type="entry name" value="tRNA-synt_1"/>
    <property type="match status" value="1"/>
</dbReference>
<dbReference type="Pfam" id="PF13603">
    <property type="entry name" value="tRNA-synt_1_2"/>
    <property type="match status" value="1"/>
</dbReference>
<dbReference type="Pfam" id="PF09334">
    <property type="entry name" value="tRNA-synt_1g"/>
    <property type="match status" value="1"/>
</dbReference>
<dbReference type="PRINTS" id="PR00985">
    <property type="entry name" value="TRNASYNTHLEU"/>
</dbReference>
<dbReference type="SUPFAM" id="SSF47323">
    <property type="entry name" value="Anticodon-binding domain of a subclass of class I aminoacyl-tRNA synthetases"/>
    <property type="match status" value="1"/>
</dbReference>
<dbReference type="SUPFAM" id="SSF52374">
    <property type="entry name" value="Nucleotidylyl transferase"/>
    <property type="match status" value="1"/>
</dbReference>
<dbReference type="SUPFAM" id="SSF50677">
    <property type="entry name" value="ValRS/IleRS/LeuRS editing domain"/>
    <property type="match status" value="1"/>
</dbReference>
<sequence length="838" mass="96655">MNLVKIEKKWQKIWEQNEVFKVKEILNKIKRYILPMFPYPSGKAHVGHVRNYTICDVIARFERSQGHNVLHAMGWDAFGLPAENAAMQNNTYPNSWVSSNVDVMRQQLKAIGLSYDWSREIITCSSQYYVHEQRFFLEMLKKGLVYQKESLVNWDPIDQTVLANEQVINGKGWRSGAIIEYRNLKQWFIKITNYADALLKGLDSLKGWPESVKTMQKKWIGQSTGININFQLKGIEASVKVFSTRPETLFGASFIALSYNHNLVQQYVNTTPETQKFIDKCSNVGTSNVNIDKMKIAVLTNLKVIHPLNSSIELPVILSNFVLMDYGTGALFGCPAHDERDHEIAKLLKLNIKQVITSTERNIDVLKEAYVGDGIMINSFHLNGLTTTEARQKVINELQHKNIGQQVTNYKLKDWGISRQRFWGCPIPIIHCKSCGAVPVPYEDLPVILPEHGVEFTGKGNPLDNHHSWKYVKCPKCHLDAVRETDTFDTFFESSWYFARFCNPTSDDMVDAKAAKYWLPVDQYIGGIEHAVMHLLYARFITRVMYDLKYIDIQEPFTSLITQGMVLHRTYQDKSNNWLYPNEVEVDSNGQLRCKADLQYVTVGKLEKMSKSKKNVVDLELVLKLYGADVARMFVLSDTPPEKDLEWSTEGIEGCYKFIQKLYNFALKLKNINLTDNKIDKVLLSKTHKTIKNVTQDIISCRLNKAIARLRELYNLIFKMSELTVQIKESFLILIRLFNPFIPHLSEEIWSLLSGRGEMLVELPWPKYEEKYIHEEEHITIAIQINGKLRSLYNCLIDTPEHDVQSAILKLEQVKKHIGDKEVRKCIFVPNKLINIII</sequence>
<proteinExistence type="inferred from homology"/>
<reference key="1">
    <citation type="journal article" date="2007" name="Proc. Natl. Acad. Sci. U.S.A.">
        <title>The Orientia tsutsugamushi genome reveals massive proliferation of conjugative type IV secretion system and host-cell interaction genes.</title>
        <authorList>
            <person name="Cho N.-H."/>
            <person name="Kim H.-R."/>
            <person name="Lee J.-H."/>
            <person name="Kim S.-Y."/>
            <person name="Kim J."/>
            <person name="Cha S."/>
            <person name="Kim S.-Y."/>
            <person name="Darby A.C."/>
            <person name="Fuxelius H.-H."/>
            <person name="Yin J."/>
            <person name="Kim J.H."/>
            <person name="Kim J."/>
            <person name="Lee S.J."/>
            <person name="Koh Y.-S."/>
            <person name="Jang W.-J."/>
            <person name="Park K.-H."/>
            <person name="Andersson S.G.E."/>
            <person name="Choi M.-S."/>
            <person name="Kim I.-S."/>
        </authorList>
    </citation>
    <scope>NUCLEOTIDE SEQUENCE [LARGE SCALE GENOMIC DNA]</scope>
    <source>
        <strain>Boryong</strain>
    </source>
</reference>